<comment type="subcellular location">
    <subcellularLocation>
        <location evidence="2">Periplasm</location>
    </subcellularLocation>
</comment>
<comment type="similarity">
    <text evidence="2">Belongs to the BhsA/McbA family.</text>
</comment>
<proteinExistence type="inferred from homology"/>
<feature type="signal peptide" evidence="1">
    <location>
        <begin position="1"/>
        <end position="21"/>
    </location>
</feature>
<feature type="chain" id="PRO_0000013792" description="Uncharacterized protein YahO">
    <location>
        <begin position="22"/>
        <end position="91"/>
    </location>
</feature>
<sequence>MKIISKMLVGALALAVTNVYAAELMTKAEFEKVESQYEKIGDISTSNEMSTADAKEDLIKKADEKGADVLVLTSGQTDNKIHGTANIYKKK</sequence>
<organism>
    <name type="scientific">Escherichia coli (strain K12)</name>
    <dbReference type="NCBI Taxonomy" id="83333"/>
    <lineage>
        <taxon>Bacteria</taxon>
        <taxon>Pseudomonadati</taxon>
        <taxon>Pseudomonadota</taxon>
        <taxon>Gammaproteobacteria</taxon>
        <taxon>Enterobacterales</taxon>
        <taxon>Enterobacteriaceae</taxon>
        <taxon>Escherichia</taxon>
    </lineage>
</organism>
<gene>
    <name type="primary">yahO</name>
    <name type="ordered locus">b0329</name>
    <name type="ordered locus">JW0321</name>
</gene>
<name>YAHO_ECOLI</name>
<reference key="1">
    <citation type="journal article" date="1997" name="Science">
        <title>The complete genome sequence of Escherichia coli K-12.</title>
        <authorList>
            <person name="Blattner F.R."/>
            <person name="Plunkett G. III"/>
            <person name="Bloch C.A."/>
            <person name="Perna N.T."/>
            <person name="Burland V."/>
            <person name="Riley M."/>
            <person name="Collado-Vides J."/>
            <person name="Glasner J.D."/>
            <person name="Rode C.K."/>
            <person name="Mayhew G.F."/>
            <person name="Gregor J."/>
            <person name="Davis N.W."/>
            <person name="Kirkpatrick H.A."/>
            <person name="Goeden M.A."/>
            <person name="Rose D.J."/>
            <person name="Mau B."/>
            <person name="Shao Y."/>
        </authorList>
    </citation>
    <scope>NUCLEOTIDE SEQUENCE [LARGE SCALE GENOMIC DNA]</scope>
    <source>
        <strain>K12 / MG1655 / ATCC 47076</strain>
    </source>
</reference>
<reference key="2">
    <citation type="journal article" date="2006" name="Mol. Syst. Biol.">
        <title>Highly accurate genome sequences of Escherichia coli K-12 strains MG1655 and W3110.</title>
        <authorList>
            <person name="Hayashi K."/>
            <person name="Morooka N."/>
            <person name="Yamamoto Y."/>
            <person name="Fujita K."/>
            <person name="Isono K."/>
            <person name="Choi S."/>
            <person name="Ohtsubo E."/>
            <person name="Baba T."/>
            <person name="Wanner B.L."/>
            <person name="Mori H."/>
            <person name="Horiuchi T."/>
        </authorList>
    </citation>
    <scope>NUCLEOTIDE SEQUENCE [LARGE SCALE GENOMIC DNA]</scope>
    <source>
        <strain>K12 / W3110 / ATCC 27325 / DSM 5911</strain>
    </source>
</reference>
<evidence type="ECO:0000255" key="1"/>
<evidence type="ECO:0000305" key="2"/>
<dbReference type="EMBL" id="U00096">
    <property type="protein sequence ID" value="AAC73432.1"/>
    <property type="molecule type" value="Genomic_DNA"/>
</dbReference>
<dbReference type="EMBL" id="AP009048">
    <property type="protein sequence ID" value="BAE76112.1"/>
    <property type="molecule type" value="Genomic_DNA"/>
</dbReference>
<dbReference type="PIR" id="A64760">
    <property type="entry name" value="A64760"/>
</dbReference>
<dbReference type="RefSeq" id="NP_414863.1">
    <property type="nucleotide sequence ID" value="NC_000913.3"/>
</dbReference>
<dbReference type="RefSeq" id="WP_000691956.1">
    <property type="nucleotide sequence ID" value="NZ_STEB01000036.1"/>
</dbReference>
<dbReference type="SMR" id="P75694"/>
<dbReference type="BioGRID" id="4259806">
    <property type="interactions" value="14"/>
</dbReference>
<dbReference type="DIP" id="DIP-11267N"/>
<dbReference type="FunCoup" id="P75694">
    <property type="interactions" value="91"/>
</dbReference>
<dbReference type="IntAct" id="P75694">
    <property type="interactions" value="5"/>
</dbReference>
<dbReference type="STRING" id="511145.b0329"/>
<dbReference type="jPOST" id="P75694"/>
<dbReference type="PaxDb" id="511145-b0329"/>
<dbReference type="EnsemblBacteria" id="AAC73432">
    <property type="protein sequence ID" value="AAC73432"/>
    <property type="gene ID" value="b0329"/>
</dbReference>
<dbReference type="GeneID" id="944985"/>
<dbReference type="KEGG" id="ecj:JW0321"/>
<dbReference type="KEGG" id="eco:b0329"/>
<dbReference type="KEGG" id="ecoc:C3026_01615"/>
<dbReference type="KEGG" id="ecoc:C3026_24785"/>
<dbReference type="PATRIC" id="fig|1411691.4.peg.1948"/>
<dbReference type="EchoBASE" id="EB3368"/>
<dbReference type="eggNOG" id="ENOG5032V0M">
    <property type="taxonomic scope" value="Bacteria"/>
</dbReference>
<dbReference type="HOGENOM" id="CLU_158602_1_3_6"/>
<dbReference type="InParanoid" id="P75694"/>
<dbReference type="OMA" id="VESHYKK"/>
<dbReference type="OrthoDB" id="6520115at2"/>
<dbReference type="PhylomeDB" id="P75694"/>
<dbReference type="BioCyc" id="EcoCyc:G6194-MONOMER"/>
<dbReference type="PRO" id="PR:P75694"/>
<dbReference type="Proteomes" id="UP000000625">
    <property type="component" value="Chromosome"/>
</dbReference>
<dbReference type="GO" id="GO:0042597">
    <property type="term" value="C:periplasmic space"/>
    <property type="evidence" value="ECO:0007669"/>
    <property type="project" value="UniProtKB-SubCell"/>
</dbReference>
<dbReference type="GO" id="GO:0009314">
    <property type="term" value="P:response to radiation"/>
    <property type="evidence" value="ECO:0000315"/>
    <property type="project" value="EcoCyc"/>
</dbReference>
<dbReference type="GO" id="GO:0006950">
    <property type="term" value="P:response to stress"/>
    <property type="evidence" value="ECO:0000318"/>
    <property type="project" value="GO_Central"/>
</dbReference>
<dbReference type="FunFam" id="3.30.1660.10:FF:000001">
    <property type="entry name" value="Multiple stress resistance protein BhsA"/>
    <property type="match status" value="1"/>
</dbReference>
<dbReference type="Gene3D" id="3.30.1660.10">
    <property type="entry name" value="Flavin-binding protein dodecin"/>
    <property type="match status" value="1"/>
</dbReference>
<dbReference type="InterPro" id="IPR025543">
    <property type="entry name" value="Dodecin-like"/>
</dbReference>
<dbReference type="InterPro" id="IPR036275">
    <property type="entry name" value="YdgH-like_sf"/>
</dbReference>
<dbReference type="InterPro" id="IPR010854">
    <property type="entry name" value="YdgH/BhsA/McbA-like_dom"/>
</dbReference>
<dbReference type="NCBIfam" id="NF007400">
    <property type="entry name" value="PRK09929.1"/>
    <property type="match status" value="1"/>
</dbReference>
<dbReference type="Pfam" id="PF07338">
    <property type="entry name" value="YdgH_BhsA-like"/>
    <property type="match status" value="1"/>
</dbReference>
<dbReference type="SUPFAM" id="SSF159871">
    <property type="entry name" value="YdgH-like"/>
    <property type="match status" value="1"/>
</dbReference>
<accession>P75694</accession>
<accession>Q2MC94</accession>
<protein>
    <recommendedName>
        <fullName>Uncharacterized protein YahO</fullName>
    </recommendedName>
</protein>
<keyword id="KW-0574">Periplasm</keyword>
<keyword id="KW-1185">Reference proteome</keyword>
<keyword id="KW-0732">Signal</keyword>